<organism>
    <name type="scientific">Uncinocarpus reesii (strain UAMH 1704)</name>
    <dbReference type="NCBI Taxonomy" id="336963"/>
    <lineage>
        <taxon>Eukaryota</taxon>
        <taxon>Fungi</taxon>
        <taxon>Dikarya</taxon>
        <taxon>Ascomycota</taxon>
        <taxon>Pezizomycotina</taxon>
        <taxon>Eurotiomycetes</taxon>
        <taxon>Eurotiomycetidae</taxon>
        <taxon>Onygenales</taxon>
        <taxon>Onygenaceae</taxon>
        <taxon>Uncinocarpus</taxon>
    </lineage>
</organism>
<gene>
    <name evidence="1" type="primary">RPS0</name>
    <name type="ORF">UREG_07299</name>
</gene>
<proteinExistence type="inferred from homology"/>
<name>RSSA_UNCRE</name>
<comment type="function">
    <text evidence="1">Required for the assembly and/or stability of the 40S ribosomal subunit. Required for the processing of the 20S rRNA-precursor to mature 18S rRNA in a late step of the maturation of 40S ribosomal subunits.</text>
</comment>
<comment type="subunit">
    <text evidence="1">Component of the small ribosomal subunit. Mature ribosomes consist of a small (40S) and a large (60S) subunit. The 40S subunit contains about 33 different proteins and 1 molecule of RNA (18S). The 60S subunit contains about 49 different proteins and 3 molecules of RNA (25S, 5.8S and 5S). Interacts with RPS21.</text>
</comment>
<comment type="subcellular location">
    <subcellularLocation>
        <location evidence="1">Cytoplasm</location>
    </subcellularLocation>
</comment>
<comment type="similarity">
    <text evidence="1">Belongs to the universal ribosomal protein uS2 family.</text>
</comment>
<evidence type="ECO:0000255" key="1">
    <source>
        <dbReference type="HAMAP-Rule" id="MF_03015"/>
    </source>
</evidence>
<evidence type="ECO:0000256" key="2">
    <source>
        <dbReference type="SAM" id="MobiDB-lite"/>
    </source>
</evidence>
<evidence type="ECO:0000305" key="3"/>
<keyword id="KW-0963">Cytoplasm</keyword>
<keyword id="KW-1185">Reference proteome</keyword>
<keyword id="KW-0687">Ribonucleoprotein</keyword>
<keyword id="KW-0689">Ribosomal protein</keyword>
<accession>C4JYP8</accession>
<reference key="1">
    <citation type="journal article" date="2009" name="Genome Res.">
        <title>Comparative genomic analyses of the human fungal pathogens Coccidioides and their relatives.</title>
        <authorList>
            <person name="Sharpton T.J."/>
            <person name="Stajich J.E."/>
            <person name="Rounsley S.D."/>
            <person name="Gardner M.J."/>
            <person name="Wortman J.R."/>
            <person name="Jordar V.S."/>
            <person name="Maiti R."/>
            <person name="Kodira C.D."/>
            <person name="Neafsey D.E."/>
            <person name="Zeng Q."/>
            <person name="Hung C.-Y."/>
            <person name="McMahan C."/>
            <person name="Muszewska A."/>
            <person name="Grynberg M."/>
            <person name="Mandel M.A."/>
            <person name="Kellner E.M."/>
            <person name="Barker B.M."/>
            <person name="Galgiani J.N."/>
            <person name="Orbach M.J."/>
            <person name="Kirkland T.N."/>
            <person name="Cole G.T."/>
            <person name="Henn M.R."/>
            <person name="Birren B.W."/>
            <person name="Taylor J.W."/>
        </authorList>
    </citation>
    <scope>NUCLEOTIDE SEQUENCE [LARGE SCALE GENOMIC DNA]</scope>
    <source>
        <strain>UAMH 1704</strain>
    </source>
</reference>
<protein>
    <recommendedName>
        <fullName evidence="1">Small ribosomal subunit protein uS2</fullName>
    </recommendedName>
    <alternativeName>
        <fullName evidence="3">40S ribosomal protein S0</fullName>
    </alternativeName>
</protein>
<dbReference type="EMBL" id="CH476619">
    <property type="protein sequence ID" value="EEP82434.1"/>
    <property type="molecule type" value="Genomic_DNA"/>
</dbReference>
<dbReference type="RefSeq" id="XP_002582526.1">
    <property type="nucleotide sequence ID" value="XM_002582480.1"/>
</dbReference>
<dbReference type="SMR" id="C4JYP8"/>
<dbReference type="FunCoup" id="C4JYP8">
    <property type="interactions" value="1085"/>
</dbReference>
<dbReference type="STRING" id="336963.C4JYP8"/>
<dbReference type="GeneID" id="8438844"/>
<dbReference type="KEGG" id="ure:UREG_07299"/>
<dbReference type="VEuPathDB" id="FungiDB:UREG_07299"/>
<dbReference type="eggNOG" id="KOG0830">
    <property type="taxonomic scope" value="Eukaryota"/>
</dbReference>
<dbReference type="HOGENOM" id="CLU_058171_0_1_1"/>
<dbReference type="InParanoid" id="C4JYP8"/>
<dbReference type="OMA" id="VKNFFEP"/>
<dbReference type="OrthoDB" id="414863at2759"/>
<dbReference type="Proteomes" id="UP000002058">
    <property type="component" value="Unassembled WGS sequence"/>
</dbReference>
<dbReference type="GO" id="GO:0022627">
    <property type="term" value="C:cytosolic small ribosomal subunit"/>
    <property type="evidence" value="ECO:0007669"/>
    <property type="project" value="UniProtKB-UniRule"/>
</dbReference>
<dbReference type="GO" id="GO:0003735">
    <property type="term" value="F:structural constituent of ribosome"/>
    <property type="evidence" value="ECO:0007669"/>
    <property type="project" value="UniProtKB-UniRule"/>
</dbReference>
<dbReference type="GO" id="GO:0000028">
    <property type="term" value="P:ribosomal small subunit assembly"/>
    <property type="evidence" value="ECO:0007669"/>
    <property type="project" value="UniProtKB-UniRule"/>
</dbReference>
<dbReference type="GO" id="GO:0006412">
    <property type="term" value="P:translation"/>
    <property type="evidence" value="ECO:0007669"/>
    <property type="project" value="UniProtKB-UniRule"/>
</dbReference>
<dbReference type="CDD" id="cd01425">
    <property type="entry name" value="RPS2"/>
    <property type="match status" value="1"/>
</dbReference>
<dbReference type="FunFam" id="3.40.50.10490:FF:000010">
    <property type="entry name" value="40S ribosomal protein S0"/>
    <property type="match status" value="1"/>
</dbReference>
<dbReference type="Gene3D" id="3.40.50.10490">
    <property type="entry name" value="Glucose-6-phosphate isomerase like protein, domain 1"/>
    <property type="match status" value="1"/>
</dbReference>
<dbReference type="HAMAP" id="MF_03015">
    <property type="entry name" value="Ribosomal_S2_euk"/>
    <property type="match status" value="1"/>
</dbReference>
<dbReference type="InterPro" id="IPR001865">
    <property type="entry name" value="Ribosomal_uS2"/>
</dbReference>
<dbReference type="InterPro" id="IPR032281">
    <property type="entry name" value="Ribosomal_uS2_C"/>
</dbReference>
<dbReference type="InterPro" id="IPR018130">
    <property type="entry name" value="Ribosomal_uS2_CS"/>
</dbReference>
<dbReference type="InterPro" id="IPR027498">
    <property type="entry name" value="Ribosomal_uS2_euk"/>
</dbReference>
<dbReference type="InterPro" id="IPR005707">
    <property type="entry name" value="Ribosomal_uS2_euk/arc"/>
</dbReference>
<dbReference type="InterPro" id="IPR023591">
    <property type="entry name" value="Ribosomal_uS2_flav_dom_sf"/>
</dbReference>
<dbReference type="NCBIfam" id="TIGR01012">
    <property type="entry name" value="uS2_euk_arch"/>
    <property type="match status" value="1"/>
</dbReference>
<dbReference type="PANTHER" id="PTHR11489">
    <property type="entry name" value="40S RIBOSOMAL PROTEIN SA"/>
    <property type="match status" value="1"/>
</dbReference>
<dbReference type="Pfam" id="PF16122">
    <property type="entry name" value="40S_SA_C"/>
    <property type="match status" value="1"/>
</dbReference>
<dbReference type="Pfam" id="PF00318">
    <property type="entry name" value="Ribosomal_S2"/>
    <property type="match status" value="2"/>
</dbReference>
<dbReference type="PRINTS" id="PR00395">
    <property type="entry name" value="RIBOSOMALS2"/>
</dbReference>
<dbReference type="SUPFAM" id="SSF52313">
    <property type="entry name" value="Ribosomal protein S2"/>
    <property type="match status" value="1"/>
</dbReference>
<dbReference type="PROSITE" id="PS00963">
    <property type="entry name" value="RIBOSOMAL_S2_2"/>
    <property type="match status" value="1"/>
</dbReference>
<feature type="chain" id="PRO_0000389292" description="Small ribosomal subunit protein uS2">
    <location>
        <begin position="1"/>
        <end position="297"/>
    </location>
</feature>
<feature type="region of interest" description="Disordered" evidence="2">
    <location>
        <begin position="276"/>
        <end position="297"/>
    </location>
</feature>
<sequence length="297" mass="31872">MAPSNLPPVFNATSQDMEMLLAAQCHLGSKNLQVHMDPYLWKTRPDGINVINIGKTWEKIVLAARIIAAIDNPADICVISARPYGQRAVLKFAAHTGAVAIAGRFTPGSFTNYITRSFKEPRLIIVTDPRTDAQAIKEASYVNIPVIALCDTDSPTEYVDVAIPTNNKGRHAIGLVWWLLAREVLRLRGTLATRETEWDVVVDLYFYRDPEAEEAKELEEAKAAGVDEIGPGAVESGFGAEGWEASAGTAFGAAAATTTTTNPATATATWEATGGDWASSAPAEGWAGEAPATEAKW</sequence>